<comment type="function">
    <text evidence="1 5">Component of the oleanane-type triterpene saponins (e.g. ginsenosides or panaxosides) biosynthetic pathway (PubMed:29378087). Oxidosqualene cyclase converting oxidosqualene into beta-amyrin, generating five rings and eight asymmetric centers in a single transformation (By similarity).</text>
</comment>
<comment type="catalytic activity">
    <reaction evidence="1">
        <text>(S)-2,3-epoxysqualene = beta-amyrin</text>
        <dbReference type="Rhea" id="RHEA:31007"/>
        <dbReference type="ChEBI" id="CHEBI:10352"/>
        <dbReference type="ChEBI" id="CHEBI:15441"/>
        <dbReference type="EC" id="5.4.99.39"/>
    </reaction>
    <physiologicalReaction direction="left-to-right" evidence="6">
        <dbReference type="Rhea" id="RHEA:31008"/>
    </physiologicalReaction>
</comment>
<comment type="pathway">
    <text evidence="8">Secondary metabolite biosynthesis; terpenoid biosynthesis.</text>
</comment>
<comment type="subunit">
    <text evidence="2">Monomer.</text>
</comment>
<comment type="subcellular location">
    <subcellularLocation>
        <location evidence="2">Endoplasmic reticulum membrane</location>
        <topology evidence="2">Peripheral membrane protein</topology>
    </subcellularLocation>
</comment>
<comment type="similarity">
    <text evidence="8">Belongs to the terpene cyclase/mutase family.</text>
</comment>
<dbReference type="EC" id="5.4.99.39" evidence="1"/>
<dbReference type="EMBL" id="AB014057">
    <property type="protein sequence ID" value="BAA33722.1"/>
    <property type="molecule type" value="mRNA"/>
</dbReference>
<dbReference type="SMR" id="O82146"/>
<dbReference type="UniPathway" id="UPA00213"/>
<dbReference type="GO" id="GO:0005789">
    <property type="term" value="C:endoplasmic reticulum membrane"/>
    <property type="evidence" value="ECO:0007669"/>
    <property type="project" value="UniProtKB-SubCell"/>
</dbReference>
<dbReference type="GO" id="GO:0005811">
    <property type="term" value="C:lipid droplet"/>
    <property type="evidence" value="ECO:0007669"/>
    <property type="project" value="InterPro"/>
</dbReference>
<dbReference type="GO" id="GO:0042300">
    <property type="term" value="F:beta-amyrin synthase activity"/>
    <property type="evidence" value="ECO:0007669"/>
    <property type="project" value="UniProtKB-EC"/>
</dbReference>
<dbReference type="GO" id="GO:0016104">
    <property type="term" value="P:triterpenoid biosynthetic process"/>
    <property type="evidence" value="ECO:0007669"/>
    <property type="project" value="InterPro"/>
</dbReference>
<dbReference type="CDD" id="cd02892">
    <property type="entry name" value="SQCY_1"/>
    <property type="match status" value="1"/>
</dbReference>
<dbReference type="FunFam" id="1.50.10.20:FF:000011">
    <property type="entry name" value="Terpene cyclase/mutase family member"/>
    <property type="match status" value="1"/>
</dbReference>
<dbReference type="FunFam" id="1.50.10.20:FF:000064">
    <property type="entry name" value="Uncharacterized protein"/>
    <property type="match status" value="1"/>
</dbReference>
<dbReference type="Gene3D" id="1.50.10.20">
    <property type="match status" value="2"/>
</dbReference>
<dbReference type="InterPro" id="IPR032696">
    <property type="entry name" value="SQ_cyclase_C"/>
</dbReference>
<dbReference type="InterPro" id="IPR032697">
    <property type="entry name" value="SQ_cyclase_N"/>
</dbReference>
<dbReference type="InterPro" id="IPR018333">
    <property type="entry name" value="Squalene_cyclase"/>
</dbReference>
<dbReference type="InterPro" id="IPR002365">
    <property type="entry name" value="Terpene_synthase_CS"/>
</dbReference>
<dbReference type="InterPro" id="IPR008930">
    <property type="entry name" value="Terpenoid_cyclase/PrenylTrfase"/>
</dbReference>
<dbReference type="NCBIfam" id="TIGR01787">
    <property type="entry name" value="squalene_cyclas"/>
    <property type="match status" value="1"/>
</dbReference>
<dbReference type="PANTHER" id="PTHR11764:SF58">
    <property type="entry name" value="BETA-AMYRIN SYNTHASE-RELATED"/>
    <property type="match status" value="1"/>
</dbReference>
<dbReference type="PANTHER" id="PTHR11764">
    <property type="entry name" value="TERPENE CYCLASE/MUTASE FAMILY MEMBER"/>
    <property type="match status" value="1"/>
</dbReference>
<dbReference type="Pfam" id="PF13243">
    <property type="entry name" value="SQHop_cyclase_C"/>
    <property type="match status" value="1"/>
</dbReference>
<dbReference type="Pfam" id="PF13249">
    <property type="entry name" value="SQHop_cyclase_N"/>
    <property type="match status" value="1"/>
</dbReference>
<dbReference type="SFLD" id="SFLDG01016">
    <property type="entry name" value="Prenyltransferase_Like_2"/>
    <property type="match status" value="1"/>
</dbReference>
<dbReference type="SUPFAM" id="SSF48239">
    <property type="entry name" value="Terpenoid cyclases/Protein prenyltransferases"/>
    <property type="match status" value="2"/>
</dbReference>
<dbReference type="PROSITE" id="PS01074">
    <property type="entry name" value="TERPENE_SYNTHASES"/>
    <property type="match status" value="1"/>
</dbReference>
<feature type="chain" id="PRO_0000413966" description="Beta-amyrin synthase 2">
    <location>
        <begin position="1"/>
        <end position="761"/>
    </location>
</feature>
<feature type="repeat" description="PFTB 1" evidence="3">
    <location>
        <begin position="98"/>
        <end position="140"/>
    </location>
</feature>
<feature type="repeat" description="PFTB 2" evidence="3">
    <location>
        <begin position="148"/>
        <end position="189"/>
    </location>
</feature>
<feature type="repeat" description="PFTB 3" evidence="3">
    <location>
        <begin position="439"/>
        <end position="483"/>
    </location>
</feature>
<feature type="repeat" description="PFTB 4" evidence="3">
    <location>
        <begin position="513"/>
        <end position="558"/>
    </location>
</feature>
<feature type="repeat" description="PFTB 5" evidence="3">
    <location>
        <begin position="590"/>
        <end position="630"/>
    </location>
</feature>
<feature type="repeat" description="PFTB 6" evidence="3">
    <location>
        <begin position="639"/>
        <end position="680"/>
    </location>
</feature>
<feature type="repeat" description="PFTB 7" evidence="3">
    <location>
        <begin position="701"/>
        <end position="742"/>
    </location>
</feature>
<feature type="active site" description="Proton donor" evidence="2">
    <location>
        <position position="484"/>
    </location>
</feature>
<feature type="site" description="Transition state stabilizer" evidence="2">
    <location>
        <position position="417"/>
    </location>
</feature>
<feature type="site" description="Transition state stabilizer" evidence="2">
    <location>
        <position position="473"/>
    </location>
</feature>
<feature type="site" description="Transition state stabilizer" evidence="2">
    <location>
        <position position="611"/>
    </location>
</feature>
<accession>O82146</accession>
<protein>
    <recommendedName>
        <fullName evidence="7">Beta-amyrin synthase 2</fullName>
        <ecNumber evidence="1">5.4.99.39</ecNumber>
    </recommendedName>
    <alternativeName>
        <fullName evidence="4">Oxidosqualene cyclase 2</fullName>
    </alternativeName>
</protein>
<gene>
    <name evidence="7" type="primary">OSCPNY2</name>
    <name evidence="4" type="synonym">PNY2</name>
</gene>
<name>BAMS2_PANGI</name>
<sequence length="761" mass="87875">MWRLMTAKGGNDPYLYSTNNFIGRQTWEFDPDYGTPAERAEVEEARLHFWNNRYQVKPSSDVLWRMQFLKEKNFKQIIPQVKVEDGEEITYEAATTTLRRAVHYFSALQADDGHWPAENAGPLFFLPPLVMCLYITGHLNTVFPAEHRIEILRYIYCHQNDDGGWGLHIEGHSTMFCTALSYICMRILGEGRDGGENNACARARKWILDHGSVTAIPSWGKTWLSILGLFDWSGSNPMPPEFWILPPFLPMHPAKMWCYCRMVYMPMSYLYGKRFVGPITPLILQLREELYAQAYDEINWRKVRHNCAKEDLYYPHPLIQDLMWDSLYIFTEPFLTRWPFNKLREKALQTTMKHIHYEDENSRYITIGCVEKVLCMLACWVEDPNGDYFKQHLARIPDYIWVAEDGMKMQSFGSQEWDTGFAIQALLASDLIDEIRPTLMKGHDFIKKSQVKENPSGDFKSMHRHISKGSWTFSDQDHGWQVSDCTAEALKCCLLFSRMPTEIVGDKMEDNQLFDAVNMLLSLQSKNGGLAAWEPAGSSEWLELLNPTEFFEDIVIEHEYVECTSSAIQAMVMFKKLYPGHRKKEIEVSITNAVQYLEDIQMPDGSWYGNWGVCFTYGTWFAMGGLTAAGKTYNNCQTLHKAVDFLIKSQRSDGGWGESYLSCPNKEYTPLEGNRSNLVHTSWAMMGLIHSRQAERDPTPLHRAAKLLINSQMESGDFPQQEITGVFMKNCMLHYAASRNIYPLWALAEYRKNVRLPSKSV</sequence>
<organism>
    <name type="scientific">Panax ginseng</name>
    <name type="common">Korean ginseng</name>
    <dbReference type="NCBI Taxonomy" id="4054"/>
    <lineage>
        <taxon>Eukaryota</taxon>
        <taxon>Viridiplantae</taxon>
        <taxon>Streptophyta</taxon>
        <taxon>Embryophyta</taxon>
        <taxon>Tracheophyta</taxon>
        <taxon>Spermatophyta</taxon>
        <taxon>Magnoliopsida</taxon>
        <taxon>eudicotyledons</taxon>
        <taxon>Gunneridae</taxon>
        <taxon>Pentapetalae</taxon>
        <taxon>asterids</taxon>
        <taxon>campanulids</taxon>
        <taxon>Apiales</taxon>
        <taxon>Araliaceae</taxon>
        <taxon>Panax</taxon>
    </lineage>
</organism>
<evidence type="ECO:0000250" key="1">
    <source>
        <dbReference type="UniProtKB" id="O82140"/>
    </source>
</evidence>
<evidence type="ECO:0000250" key="2">
    <source>
        <dbReference type="UniProtKB" id="P48449"/>
    </source>
</evidence>
<evidence type="ECO:0000255" key="3"/>
<evidence type="ECO:0000303" key="4">
    <source>
    </source>
</evidence>
<evidence type="ECO:0000303" key="5">
    <source>
    </source>
</evidence>
<evidence type="ECO:0000303" key="6">
    <source>
    </source>
</evidence>
<evidence type="ECO:0000303" key="7">
    <source ref="1"/>
</evidence>
<evidence type="ECO:0000305" key="8"/>
<reference key="1">
    <citation type="submission" date="1998-05" db="EMBL/GenBank/DDBJ databases">
        <title>Molecular cloning of oxidosqualene cyclase cDNA from Panax ginseng: the isogene that encodes beta-amyrin synthase.</title>
        <authorList>
            <person name="Kushiro T."/>
            <person name="Shibuya M."/>
            <person name="Ebizuka Y."/>
        </authorList>
    </citation>
    <scope>NUCLEOTIDE SEQUENCE [MRNA]</scope>
    <source>
        <tissue>Root</tissue>
    </source>
</reference>
<reference key="2">
    <citation type="journal article" date="2013" name="J. Ginseng Res.">
        <title>The improvement of ginsenoside accumulation in Panax ginseng as a result of gamma-irradiation.</title>
        <authorList>
            <person name="Kim D.S."/>
            <person name="Song M."/>
            <person name="Kim S.-H."/>
            <person name="Jang D.-S."/>
            <person name="Kim J.-B."/>
            <person name="Ha B.-K."/>
            <person name="Kim S.H."/>
            <person name="Lee K.J."/>
            <person name="Kang S.-Y."/>
            <person name="Jeong I.Y."/>
        </authorList>
    </citation>
    <scope>GENE FAMILY</scope>
</reference>
<reference key="3">
    <citation type="journal article" date="2018" name="Biotechnol. Appl. Biochem.">
        <title>Advances in ginsenoside biosynthesis and metabolic regulation.</title>
        <authorList>
            <person name="Lu J."/>
            <person name="Li J."/>
            <person name="Wang S."/>
            <person name="Yao L."/>
            <person name="Liang W."/>
            <person name="Wang J."/>
            <person name="Gao W."/>
        </authorList>
    </citation>
    <scope>REVIEW</scope>
</reference>
<reference key="4">
    <citation type="journal article" date="2018" name="Molecules">
        <title>Progress on the studies of the key enzymes of ginsenoside biosynthesis.</title>
        <authorList>
            <person name="Yang J.-L."/>
            <person name="Hu Z.-F."/>
            <person name="Zhang T.-T."/>
            <person name="Gu A.-D."/>
            <person name="Gong T."/>
            <person name="Zhu P."/>
        </authorList>
    </citation>
    <scope>REVIEW</scope>
</reference>
<keyword id="KW-0256">Endoplasmic reticulum</keyword>
<keyword id="KW-0413">Isomerase</keyword>
<keyword id="KW-0414">Isoprene biosynthesis</keyword>
<keyword id="KW-0472">Membrane</keyword>
<keyword id="KW-0677">Repeat</keyword>
<proteinExistence type="evidence at transcript level"/>